<protein>
    <recommendedName>
        <fullName evidence="1">Elongation factor 2</fullName>
        <shortName evidence="1">EF-2</shortName>
    </recommendedName>
</protein>
<evidence type="ECO:0000255" key="1">
    <source>
        <dbReference type="HAMAP-Rule" id="MF_00054"/>
    </source>
</evidence>
<comment type="function">
    <text evidence="1">Catalyzes the GTP-dependent ribosomal translocation step during translation elongation. During this step, the ribosome changes from the pre-translocational (PRE) to the post-translocational (POST) state as the newly formed A-site-bound peptidyl-tRNA and P-site-bound deacylated tRNA move to the P and E sites, respectively. Catalyzes the coordinated movement of the two tRNA molecules, the mRNA and conformational changes in the ribosome.</text>
</comment>
<comment type="subcellular location">
    <subcellularLocation>
        <location evidence="1">Cytoplasm</location>
    </subcellularLocation>
</comment>
<comment type="similarity">
    <text evidence="1">Belongs to the TRAFAC class translation factor GTPase superfamily. Classic translation factor GTPase family. EF-G/EF-2 subfamily.</text>
</comment>
<organism>
    <name type="scientific">Methanococcus maripaludis (strain DSM 14266 / JCM 13030 / NBRC 101832 / S2 / LL)</name>
    <dbReference type="NCBI Taxonomy" id="267377"/>
    <lineage>
        <taxon>Archaea</taxon>
        <taxon>Methanobacteriati</taxon>
        <taxon>Methanobacteriota</taxon>
        <taxon>Methanomada group</taxon>
        <taxon>Methanococci</taxon>
        <taxon>Methanococcales</taxon>
        <taxon>Methanococcaceae</taxon>
        <taxon>Methanococcus</taxon>
    </lineage>
</organism>
<reference key="1">
    <citation type="journal article" date="2004" name="J. Bacteriol.">
        <title>Complete genome sequence of the genetically tractable hydrogenotrophic methanogen Methanococcus maripaludis.</title>
        <authorList>
            <person name="Hendrickson E.L."/>
            <person name="Kaul R."/>
            <person name="Zhou Y."/>
            <person name="Bovee D."/>
            <person name="Chapman P."/>
            <person name="Chung J."/>
            <person name="Conway de Macario E."/>
            <person name="Dodsworth J.A."/>
            <person name="Gillett W."/>
            <person name="Graham D.E."/>
            <person name="Hackett M."/>
            <person name="Haydock A.K."/>
            <person name="Kang A."/>
            <person name="Land M.L."/>
            <person name="Levy R."/>
            <person name="Lie T.J."/>
            <person name="Major T.A."/>
            <person name="Moore B.C."/>
            <person name="Porat I."/>
            <person name="Palmeiri A."/>
            <person name="Rouse G."/>
            <person name="Saenphimmachak C."/>
            <person name="Soell D."/>
            <person name="Van Dien S."/>
            <person name="Wang T."/>
            <person name="Whitman W.B."/>
            <person name="Xia Q."/>
            <person name="Zhang Y."/>
            <person name="Larimer F.W."/>
            <person name="Olson M.V."/>
            <person name="Leigh J.A."/>
        </authorList>
    </citation>
    <scope>NUCLEOTIDE SEQUENCE [LARGE SCALE GENOMIC DNA]</scope>
    <source>
        <strain>DSM 14266 / JCM 13030 / NBRC 101832 / S2 / LL</strain>
    </source>
</reference>
<gene>
    <name evidence="1" type="primary">fusA</name>
    <name type="ordered locus">MMP1369</name>
</gene>
<keyword id="KW-0963">Cytoplasm</keyword>
<keyword id="KW-0251">Elongation factor</keyword>
<keyword id="KW-0342">GTP-binding</keyword>
<keyword id="KW-0547">Nucleotide-binding</keyword>
<keyword id="KW-0648">Protein biosynthesis</keyword>
<keyword id="KW-1185">Reference proteome</keyword>
<sequence>MGRRAKMVEKVKTLMETHEQIRNMGICAHIDHGKTTLSDNLLAGAGMISKELAGDQLALDFDEEEAARGITIYAANVSMVHEYSGKEYLINLIDTPGHVDFGGDVTRAMRAIDGAVVVCCAVEGVMPQTETVLRQALKEKVKPVLFINKVDRLINELKLTPEELQGRFMKIIAEVNKLIEKMAPEEFKKEWLCDVANGKVAFGSAYNNWAISVPYMQRSGISFKDIIDYCEQENQKELAEKAPLHEVVLDMSIKHLPNPLTAQKYRIPNIWKGDAESTIGKSMVACDPNGPLAGVVTKIIVDKHAGAISACRLFSGRIKQGDDLYLVGSKQKARAQQVSIFMGAERVQVPSISAGNICALTGLREATAGETVCSPSEILEPGFESLSHTSEPVITVAIEAKNTKDLPKLIEILRQIAREDNTVRVEINEETGEHLISGMGELHIEVITNTKIGRDGGIEVDVGEPIVVYRETIMGTSPEIEGKSPNKHNKLYMIAEPMEESVYAAYVEGKLHDEDYKKKTTADGEARLVEAGLEKDQAKKVMSIYNGNMIVNMTRGIVQLDEARELIIEGFKEGVRNGPLAAEKVQGVKIRLVDATFHEDAIHRGPAQIIPAVRFGVRDAVAQAKPVLLEPMQSVYINTPQDYMGDGMKEINNRRGQILDMEQEGDMSIIKSSVPVAEMFGFAGAIRGATQGRCLWSVEFSGFERVPNELQPKIAKQIRDRKGLKSE</sequence>
<feature type="chain" id="PRO_0000091034" description="Elongation factor 2">
    <location>
        <begin position="1"/>
        <end position="727"/>
    </location>
</feature>
<feature type="domain" description="tr-type G">
    <location>
        <begin position="19"/>
        <end position="260"/>
    </location>
</feature>
<feature type="binding site" evidence="1">
    <location>
        <begin position="28"/>
        <end position="35"/>
    </location>
    <ligand>
        <name>GTP</name>
        <dbReference type="ChEBI" id="CHEBI:37565"/>
    </ligand>
</feature>
<feature type="binding site" evidence="1">
    <location>
        <begin position="94"/>
        <end position="98"/>
    </location>
    <ligand>
        <name>GTP</name>
        <dbReference type="ChEBI" id="CHEBI:37565"/>
    </ligand>
</feature>
<feature type="binding site" evidence="1">
    <location>
        <begin position="148"/>
        <end position="151"/>
    </location>
    <ligand>
        <name>GTP</name>
        <dbReference type="ChEBI" id="CHEBI:37565"/>
    </ligand>
</feature>
<feature type="modified residue" description="Diphthamide" evidence="1">
    <location>
        <position position="603"/>
    </location>
</feature>
<name>EF2_METMP</name>
<accession>Q6LXI2</accession>
<proteinExistence type="inferred from homology"/>
<dbReference type="EMBL" id="BX950229">
    <property type="protein sequence ID" value="CAF30925.1"/>
    <property type="molecule type" value="Genomic_DNA"/>
</dbReference>
<dbReference type="RefSeq" id="WP_011171313.1">
    <property type="nucleotide sequence ID" value="NC_005791.1"/>
</dbReference>
<dbReference type="SMR" id="Q6LXI2"/>
<dbReference type="STRING" id="267377.MMP1369"/>
<dbReference type="EnsemblBacteria" id="CAF30925">
    <property type="protein sequence ID" value="CAF30925"/>
    <property type="gene ID" value="MMP1369"/>
</dbReference>
<dbReference type="GeneID" id="2762301"/>
<dbReference type="KEGG" id="mmp:MMP1369"/>
<dbReference type="PATRIC" id="fig|267377.15.peg.1404"/>
<dbReference type="eggNOG" id="arCOG01559">
    <property type="taxonomic scope" value="Archaea"/>
</dbReference>
<dbReference type="HOGENOM" id="CLU_002794_11_1_2"/>
<dbReference type="OrthoDB" id="6290at2157"/>
<dbReference type="Proteomes" id="UP000000590">
    <property type="component" value="Chromosome"/>
</dbReference>
<dbReference type="GO" id="GO:0005829">
    <property type="term" value="C:cytosol"/>
    <property type="evidence" value="ECO:0007669"/>
    <property type="project" value="TreeGrafter"/>
</dbReference>
<dbReference type="GO" id="GO:1990904">
    <property type="term" value="C:ribonucleoprotein complex"/>
    <property type="evidence" value="ECO:0007669"/>
    <property type="project" value="TreeGrafter"/>
</dbReference>
<dbReference type="GO" id="GO:0005525">
    <property type="term" value="F:GTP binding"/>
    <property type="evidence" value="ECO:0007669"/>
    <property type="project" value="UniProtKB-UniRule"/>
</dbReference>
<dbReference type="GO" id="GO:0003924">
    <property type="term" value="F:GTPase activity"/>
    <property type="evidence" value="ECO:0007669"/>
    <property type="project" value="InterPro"/>
</dbReference>
<dbReference type="GO" id="GO:0003746">
    <property type="term" value="F:translation elongation factor activity"/>
    <property type="evidence" value="ECO:0007669"/>
    <property type="project" value="UniProtKB-UniRule"/>
</dbReference>
<dbReference type="CDD" id="cd01681">
    <property type="entry name" value="aeEF2_snRNP_like_IV"/>
    <property type="match status" value="1"/>
</dbReference>
<dbReference type="CDD" id="cd01885">
    <property type="entry name" value="EF2"/>
    <property type="match status" value="1"/>
</dbReference>
<dbReference type="CDD" id="cd16268">
    <property type="entry name" value="EF2_II"/>
    <property type="match status" value="1"/>
</dbReference>
<dbReference type="CDD" id="cd16261">
    <property type="entry name" value="EF2_snRNP_III"/>
    <property type="match status" value="1"/>
</dbReference>
<dbReference type="CDD" id="cd01514">
    <property type="entry name" value="Elongation_Factor_C"/>
    <property type="match status" value="1"/>
</dbReference>
<dbReference type="FunFam" id="3.40.50.300:FF:000684">
    <property type="entry name" value="Elongation factor 2"/>
    <property type="match status" value="1"/>
</dbReference>
<dbReference type="FunFam" id="3.30.70.240:FF:000001">
    <property type="entry name" value="Elongation factor G"/>
    <property type="match status" value="1"/>
</dbReference>
<dbReference type="FunFam" id="3.30.70.870:FF:000002">
    <property type="entry name" value="Translation elongation factor 2"/>
    <property type="match status" value="1"/>
</dbReference>
<dbReference type="Gene3D" id="3.30.230.10">
    <property type="match status" value="1"/>
</dbReference>
<dbReference type="Gene3D" id="3.30.70.240">
    <property type="match status" value="1"/>
</dbReference>
<dbReference type="Gene3D" id="3.30.70.870">
    <property type="entry name" value="Elongation Factor G (Translational Gtpase), domain 3"/>
    <property type="match status" value="1"/>
</dbReference>
<dbReference type="Gene3D" id="3.40.50.300">
    <property type="entry name" value="P-loop containing nucleotide triphosphate hydrolases"/>
    <property type="match status" value="1"/>
</dbReference>
<dbReference type="Gene3D" id="2.40.30.10">
    <property type="entry name" value="Translation factors"/>
    <property type="match status" value="1"/>
</dbReference>
<dbReference type="HAMAP" id="MF_00054_A">
    <property type="entry name" value="EF_G_EF_2_A"/>
    <property type="match status" value="1"/>
</dbReference>
<dbReference type="InterPro" id="IPR053905">
    <property type="entry name" value="EF-G-like_DII"/>
</dbReference>
<dbReference type="InterPro" id="IPR041095">
    <property type="entry name" value="EFG_II"/>
</dbReference>
<dbReference type="InterPro" id="IPR035647">
    <property type="entry name" value="EFG_III/V"/>
</dbReference>
<dbReference type="InterPro" id="IPR000640">
    <property type="entry name" value="EFG_V-like"/>
</dbReference>
<dbReference type="InterPro" id="IPR031157">
    <property type="entry name" value="G_TR_CS"/>
</dbReference>
<dbReference type="InterPro" id="IPR027417">
    <property type="entry name" value="P-loop_NTPase"/>
</dbReference>
<dbReference type="InterPro" id="IPR020568">
    <property type="entry name" value="Ribosomal_Su5_D2-typ_SF"/>
</dbReference>
<dbReference type="InterPro" id="IPR014721">
    <property type="entry name" value="Ribsml_uS5_D2-typ_fold_subgr"/>
</dbReference>
<dbReference type="InterPro" id="IPR005225">
    <property type="entry name" value="Small_GTP-bd"/>
</dbReference>
<dbReference type="InterPro" id="IPR000795">
    <property type="entry name" value="T_Tr_GTP-bd_dom"/>
</dbReference>
<dbReference type="InterPro" id="IPR009000">
    <property type="entry name" value="Transl_B-barrel_sf"/>
</dbReference>
<dbReference type="InterPro" id="IPR004543">
    <property type="entry name" value="Transl_elong_EFG/EF2_arc"/>
</dbReference>
<dbReference type="InterPro" id="IPR005517">
    <property type="entry name" value="Transl_elong_EFG/EF2_IV"/>
</dbReference>
<dbReference type="NCBIfam" id="TIGR00490">
    <property type="entry name" value="aEF-2"/>
    <property type="match status" value="1"/>
</dbReference>
<dbReference type="NCBIfam" id="TIGR00231">
    <property type="entry name" value="small_GTP"/>
    <property type="match status" value="1"/>
</dbReference>
<dbReference type="PANTHER" id="PTHR42908:SF3">
    <property type="entry name" value="ELONGATION FACTOR-LIKE GTPASE 1"/>
    <property type="match status" value="1"/>
</dbReference>
<dbReference type="PANTHER" id="PTHR42908">
    <property type="entry name" value="TRANSLATION ELONGATION FACTOR-RELATED"/>
    <property type="match status" value="1"/>
</dbReference>
<dbReference type="Pfam" id="PF22042">
    <property type="entry name" value="EF-G_D2"/>
    <property type="match status" value="1"/>
</dbReference>
<dbReference type="Pfam" id="PF00679">
    <property type="entry name" value="EFG_C"/>
    <property type="match status" value="1"/>
</dbReference>
<dbReference type="Pfam" id="PF14492">
    <property type="entry name" value="EFG_III"/>
    <property type="match status" value="1"/>
</dbReference>
<dbReference type="Pfam" id="PF03764">
    <property type="entry name" value="EFG_IV"/>
    <property type="match status" value="1"/>
</dbReference>
<dbReference type="Pfam" id="PF00009">
    <property type="entry name" value="GTP_EFTU"/>
    <property type="match status" value="1"/>
</dbReference>
<dbReference type="PRINTS" id="PR00315">
    <property type="entry name" value="ELONGATNFCT"/>
</dbReference>
<dbReference type="SMART" id="SM00838">
    <property type="entry name" value="EFG_C"/>
    <property type="match status" value="1"/>
</dbReference>
<dbReference type="SMART" id="SM00889">
    <property type="entry name" value="EFG_IV"/>
    <property type="match status" value="1"/>
</dbReference>
<dbReference type="SUPFAM" id="SSF54980">
    <property type="entry name" value="EF-G C-terminal domain-like"/>
    <property type="match status" value="2"/>
</dbReference>
<dbReference type="SUPFAM" id="SSF52540">
    <property type="entry name" value="P-loop containing nucleoside triphosphate hydrolases"/>
    <property type="match status" value="1"/>
</dbReference>
<dbReference type="SUPFAM" id="SSF54211">
    <property type="entry name" value="Ribosomal protein S5 domain 2-like"/>
    <property type="match status" value="1"/>
</dbReference>
<dbReference type="SUPFAM" id="SSF50447">
    <property type="entry name" value="Translation proteins"/>
    <property type="match status" value="1"/>
</dbReference>
<dbReference type="PROSITE" id="PS00301">
    <property type="entry name" value="G_TR_1"/>
    <property type="match status" value="1"/>
</dbReference>
<dbReference type="PROSITE" id="PS51722">
    <property type="entry name" value="G_TR_2"/>
    <property type="match status" value="1"/>
</dbReference>